<proteinExistence type="inferred from homology"/>
<comment type="function">
    <text evidence="1">Forms part of the ribosomal stalk, playing a central role in the interaction of the ribosome with GTP-bound translation factors.</text>
</comment>
<comment type="subunit">
    <text evidence="1">Part of the ribosomal stalk of the 50S ribosomal subunit. The N-terminus interacts with L11 and the large rRNA to form the base of the stalk. The C-terminus forms an elongated spine to which L12 dimers bind in a sequential fashion forming a multimeric L10(L12)X complex.</text>
</comment>
<comment type="similarity">
    <text evidence="1">Belongs to the universal ribosomal protein uL10 family.</text>
</comment>
<protein>
    <recommendedName>
        <fullName evidence="1">Large ribosomal subunit protein uL10</fullName>
    </recommendedName>
    <alternativeName>
        <fullName evidence="2">50S ribosomal protein L10</fullName>
    </alternativeName>
</protein>
<reference key="1">
    <citation type="journal article" date="2008" name="PLoS Genet.">
        <title>Complete genome sequence of the complex carbohydrate-degrading marine bacterium, Saccharophagus degradans strain 2-40 T.</title>
        <authorList>
            <person name="Weiner R.M."/>
            <person name="Taylor L.E. II"/>
            <person name="Henrissat B."/>
            <person name="Hauser L."/>
            <person name="Land M."/>
            <person name="Coutinho P.M."/>
            <person name="Rancurel C."/>
            <person name="Saunders E.H."/>
            <person name="Longmire A.G."/>
            <person name="Zhang H."/>
            <person name="Bayer E.A."/>
            <person name="Gilbert H.J."/>
            <person name="Larimer F."/>
            <person name="Zhulin I.B."/>
            <person name="Ekborg N.A."/>
            <person name="Lamed R."/>
            <person name="Richardson P.M."/>
            <person name="Borovok I."/>
            <person name="Hutcheson S."/>
        </authorList>
    </citation>
    <scope>NUCLEOTIDE SEQUENCE [LARGE SCALE GENOMIC DNA]</scope>
    <source>
        <strain>2-40 / ATCC 43961 / DSM 17024</strain>
    </source>
</reference>
<keyword id="KW-1185">Reference proteome</keyword>
<keyword id="KW-0687">Ribonucleoprotein</keyword>
<keyword id="KW-0689">Ribosomal protein</keyword>
<keyword id="KW-0694">RNA-binding</keyword>
<keyword id="KW-0699">rRNA-binding</keyword>
<feature type="chain" id="PRO_1000005586" description="Large ribosomal subunit protein uL10">
    <location>
        <begin position="1"/>
        <end position="176"/>
    </location>
</feature>
<accession>Q21M95</accession>
<organism>
    <name type="scientific">Saccharophagus degradans (strain 2-40 / ATCC 43961 / DSM 17024)</name>
    <dbReference type="NCBI Taxonomy" id="203122"/>
    <lineage>
        <taxon>Bacteria</taxon>
        <taxon>Pseudomonadati</taxon>
        <taxon>Pseudomonadota</taxon>
        <taxon>Gammaproteobacteria</taxon>
        <taxon>Cellvibrionales</taxon>
        <taxon>Cellvibrionaceae</taxon>
        <taxon>Saccharophagus</taxon>
    </lineage>
</organism>
<name>RL10_SACD2</name>
<evidence type="ECO:0000255" key="1">
    <source>
        <dbReference type="HAMAP-Rule" id="MF_00362"/>
    </source>
</evidence>
<evidence type="ECO:0000305" key="2"/>
<gene>
    <name evidence="1" type="primary">rplJ</name>
    <name type="ordered locus">Sde_0922</name>
</gene>
<dbReference type="EMBL" id="CP000282">
    <property type="protein sequence ID" value="ABD80184.1"/>
    <property type="molecule type" value="Genomic_DNA"/>
</dbReference>
<dbReference type="RefSeq" id="WP_011467405.1">
    <property type="nucleotide sequence ID" value="NC_007912.1"/>
</dbReference>
<dbReference type="STRING" id="203122.Sde_0922"/>
<dbReference type="GeneID" id="98612608"/>
<dbReference type="KEGG" id="sde:Sde_0922"/>
<dbReference type="eggNOG" id="COG0244">
    <property type="taxonomic scope" value="Bacteria"/>
</dbReference>
<dbReference type="HOGENOM" id="CLU_092227_0_2_6"/>
<dbReference type="OrthoDB" id="9808307at2"/>
<dbReference type="Proteomes" id="UP000001947">
    <property type="component" value="Chromosome"/>
</dbReference>
<dbReference type="GO" id="GO:0015934">
    <property type="term" value="C:large ribosomal subunit"/>
    <property type="evidence" value="ECO:0007669"/>
    <property type="project" value="InterPro"/>
</dbReference>
<dbReference type="GO" id="GO:0070180">
    <property type="term" value="F:large ribosomal subunit rRNA binding"/>
    <property type="evidence" value="ECO:0007669"/>
    <property type="project" value="UniProtKB-UniRule"/>
</dbReference>
<dbReference type="GO" id="GO:0003735">
    <property type="term" value="F:structural constituent of ribosome"/>
    <property type="evidence" value="ECO:0007669"/>
    <property type="project" value="InterPro"/>
</dbReference>
<dbReference type="GO" id="GO:0006412">
    <property type="term" value="P:translation"/>
    <property type="evidence" value="ECO:0007669"/>
    <property type="project" value="UniProtKB-UniRule"/>
</dbReference>
<dbReference type="CDD" id="cd05797">
    <property type="entry name" value="Ribosomal_L10"/>
    <property type="match status" value="1"/>
</dbReference>
<dbReference type="FunFam" id="3.30.70.1730:FF:000001">
    <property type="entry name" value="50S ribosomal protein L10"/>
    <property type="match status" value="1"/>
</dbReference>
<dbReference type="Gene3D" id="3.30.70.1730">
    <property type="match status" value="1"/>
</dbReference>
<dbReference type="Gene3D" id="6.10.250.290">
    <property type="match status" value="1"/>
</dbReference>
<dbReference type="HAMAP" id="MF_00362">
    <property type="entry name" value="Ribosomal_uL10"/>
    <property type="match status" value="1"/>
</dbReference>
<dbReference type="InterPro" id="IPR001790">
    <property type="entry name" value="Ribosomal_uL10"/>
</dbReference>
<dbReference type="InterPro" id="IPR043141">
    <property type="entry name" value="Ribosomal_uL10-like_sf"/>
</dbReference>
<dbReference type="InterPro" id="IPR022973">
    <property type="entry name" value="Ribosomal_uL10_bac"/>
</dbReference>
<dbReference type="InterPro" id="IPR047865">
    <property type="entry name" value="Ribosomal_uL10_bac_type"/>
</dbReference>
<dbReference type="InterPro" id="IPR002363">
    <property type="entry name" value="Ribosomal_uL10_CS_bac"/>
</dbReference>
<dbReference type="NCBIfam" id="NF000955">
    <property type="entry name" value="PRK00099.1-1"/>
    <property type="match status" value="1"/>
</dbReference>
<dbReference type="PANTHER" id="PTHR11560">
    <property type="entry name" value="39S RIBOSOMAL PROTEIN L10, MITOCHONDRIAL"/>
    <property type="match status" value="1"/>
</dbReference>
<dbReference type="Pfam" id="PF00466">
    <property type="entry name" value="Ribosomal_L10"/>
    <property type="match status" value="1"/>
</dbReference>
<dbReference type="SUPFAM" id="SSF160369">
    <property type="entry name" value="Ribosomal protein L10-like"/>
    <property type="match status" value="1"/>
</dbReference>
<dbReference type="PROSITE" id="PS01109">
    <property type="entry name" value="RIBOSOMAL_L10"/>
    <property type="match status" value="1"/>
</dbReference>
<sequence length="176" mass="18793">MAIRLEDKKAIVAEVNETAANALSLVVADARGVTVGAMDTLRKQARESGVRLQVVRNTLAKRAIEGTDFECVKDALVGPSIFGFSMEDPGAAARLFKDFAKEQSKFEIKALSVGGKLLEAGQIDALAKLPTLEQALGQLASVMIAPVTKLVRTFNEVPTKVTRVVAAVRDQKQDAA</sequence>